<proteinExistence type="evidence at transcript level"/>
<name>GAR1_RAT</name>
<keyword id="KW-1017">Isopeptide bond</keyword>
<keyword id="KW-0539">Nucleus</keyword>
<keyword id="KW-1185">Reference proteome</keyword>
<keyword id="KW-0677">Repeat</keyword>
<keyword id="KW-0687">Ribonucleoprotein</keyword>
<keyword id="KW-0690">Ribosome biogenesis</keyword>
<keyword id="KW-0694">RNA-binding</keyword>
<keyword id="KW-0698">rRNA processing</keyword>
<keyword id="KW-0832">Ubl conjugation</keyword>
<protein>
    <recommendedName>
        <fullName>H/ACA ribonucleoprotein complex subunit 1</fullName>
    </recommendedName>
    <alternativeName>
        <fullName>Nucleolar protein family A member 1</fullName>
    </alternativeName>
    <alternativeName>
        <fullName>snoRNP protein GAR1</fullName>
    </alternativeName>
</protein>
<gene>
    <name type="primary">Gar1</name>
    <name type="synonym">Nola1</name>
</gene>
<evidence type="ECO:0000250" key="1"/>
<evidence type="ECO:0000250" key="2">
    <source>
        <dbReference type="UniProtKB" id="Q9NY12"/>
    </source>
</evidence>
<evidence type="ECO:0000256" key="3">
    <source>
        <dbReference type="SAM" id="MobiDB-lite"/>
    </source>
</evidence>
<evidence type="ECO:0000305" key="4"/>
<comment type="function">
    <text evidence="1">Required for ribosome biogenesis and telomere maintenance. Part of the H/ACA small nucleolar ribonucleoprotein (H/ACA snoRNP) complex, which catalyzes pseudouridylation of rRNA. This involves the isomerization of uridine such that the ribose is subsequently attached to C5, instead of the normal N1. Each rRNA can contain up to 100 pseudouridine ('psi') residues, which may serve to stabilize the conformation of rRNAs. May also be required for correct processing or intranuclear trafficking of TERC, the RNA component of the telomerase reverse transcriptase (TERT) holoenzyme (By similarity).</text>
</comment>
<comment type="subunit">
    <text evidence="2">Part of the H/ACA small nucleolar ribonucleoprotein (H/ACA snoRNP) complex, which contains NHP2/NOLA2, GAR1/NOLA1, NOP10/NOLA3, and DKC1/NOLA4, which is presumed to be the catalytic subunit. The complex contains a stable core formed by binding of one or two NOP10-DKC1 heterodimers to NHP2; GAR1 subsequently binds to this core via DKC1. The complex binds a box H/ACA small nucleolar RNA (snoRNA), which may target the specific site of modification within the RNA substrate. The complex also interacts with TERC, which contains a 3'-terminal domain related to the box H/ACA snoRNAs. Specific interactions with snoRNAs or TERC are mediated by GAR1 and NHP2. Associates with NOLC1/NOPP140. H/ACA snoRNPs interact with the SMN complex, consisting of SMN1 or SMN2, GEMIN2/SIP1, DDX20/GEMIN3, and GEMIN4. This is mediated by interaction between GAR1 and SMN1 or SMN2. The SMN complex may be required for correct assembly of the H/ACA snoRNP complex. Component of the telomerase holoenzyme complex composed of one molecule of TERT, one molecule of WRAP53/TCAB1, two molecules of H/ACA ribonucleoprotein complex subunits DKC1, NOP10, NHP2 and GAR1, and a telomerase RNA template component (TERC). The telomerase holoenzyme complex is associated with TEP1, SMG6/EST1A and POT1.</text>
</comment>
<comment type="subcellular location">
    <subcellularLocation>
        <location evidence="1">Nucleus</location>
        <location evidence="1">Nucleolus</location>
    </subcellularLocation>
    <subcellularLocation>
        <location evidence="1">Nucleus</location>
        <location evidence="1">Cajal body</location>
    </subcellularLocation>
    <text evidence="1">Also localized to Cajal bodies (coiled bodies).</text>
</comment>
<comment type="domain">
    <text evidence="1">Interaction with SMN1 requires at least one of the RGG-box regions.</text>
</comment>
<comment type="similarity">
    <text evidence="4">Belongs to the GAR1 family.</text>
</comment>
<reference key="1">
    <citation type="journal article" date="2004" name="Genome Res.">
        <title>The status, quality, and expansion of the NIH full-length cDNA project: the Mammalian Gene Collection (MGC).</title>
        <authorList>
            <consortium name="The MGC Project Team"/>
        </authorList>
    </citation>
    <scope>NUCLEOTIDE SEQUENCE [LARGE SCALE MRNA]</scope>
    <source>
        <tissue>Kidney</tissue>
    </source>
</reference>
<organism>
    <name type="scientific">Rattus norvegicus</name>
    <name type="common">Rat</name>
    <dbReference type="NCBI Taxonomy" id="10116"/>
    <lineage>
        <taxon>Eukaryota</taxon>
        <taxon>Metazoa</taxon>
        <taxon>Chordata</taxon>
        <taxon>Craniata</taxon>
        <taxon>Vertebrata</taxon>
        <taxon>Euteleostomi</taxon>
        <taxon>Mammalia</taxon>
        <taxon>Eutheria</taxon>
        <taxon>Euarchontoglires</taxon>
        <taxon>Glires</taxon>
        <taxon>Rodentia</taxon>
        <taxon>Myomorpha</taxon>
        <taxon>Muroidea</taxon>
        <taxon>Muridae</taxon>
        <taxon>Murinae</taxon>
        <taxon>Rattus</taxon>
    </lineage>
</organism>
<dbReference type="EMBL" id="BC079131">
    <property type="protein sequence ID" value="AAH79131.1"/>
    <property type="molecule type" value="mRNA"/>
</dbReference>
<dbReference type="RefSeq" id="NP_001019477.1">
    <property type="nucleotide sequence ID" value="NM_001024306.1"/>
</dbReference>
<dbReference type="SMR" id="Q6AYA1"/>
<dbReference type="CORUM" id="Q6AYA1"/>
<dbReference type="FunCoup" id="Q6AYA1">
    <property type="interactions" value="1218"/>
</dbReference>
<dbReference type="STRING" id="10116.ENSRNOP00000074835"/>
<dbReference type="iPTMnet" id="Q6AYA1"/>
<dbReference type="PhosphoSitePlus" id="Q6AYA1"/>
<dbReference type="jPOST" id="Q6AYA1"/>
<dbReference type="PaxDb" id="10116-ENSRNOP00000013149"/>
<dbReference type="GeneID" id="499709"/>
<dbReference type="KEGG" id="rno:499709"/>
<dbReference type="UCSC" id="RGD:1563995">
    <property type="organism name" value="rat"/>
</dbReference>
<dbReference type="AGR" id="RGD:1563995"/>
<dbReference type="CTD" id="54433"/>
<dbReference type="RGD" id="1563995">
    <property type="gene designation" value="Gar1"/>
</dbReference>
<dbReference type="VEuPathDB" id="HostDB:ENSRNOG00000061146"/>
<dbReference type="eggNOG" id="KOG3262">
    <property type="taxonomic scope" value="Eukaryota"/>
</dbReference>
<dbReference type="HOGENOM" id="CLU_080002_0_1_1"/>
<dbReference type="InParanoid" id="Q6AYA1"/>
<dbReference type="OrthoDB" id="2187159at2759"/>
<dbReference type="TreeFam" id="TF350747"/>
<dbReference type="Reactome" id="R-RNO-171319">
    <property type="pathway name" value="Telomere Extension By Telomerase"/>
</dbReference>
<dbReference type="PRO" id="PR:Q6AYA1"/>
<dbReference type="Proteomes" id="UP000002494">
    <property type="component" value="Chromosome 2"/>
</dbReference>
<dbReference type="Bgee" id="ENSRNOG00000061146">
    <property type="expression patterns" value="Expressed in thymus and 20 other cell types or tissues"/>
</dbReference>
<dbReference type="ExpressionAtlas" id="Q6AYA1">
    <property type="expression patterns" value="baseline and differential"/>
</dbReference>
<dbReference type="GO" id="GO:0031429">
    <property type="term" value="C:box H/ACA snoRNP complex"/>
    <property type="evidence" value="ECO:0000314"/>
    <property type="project" value="RGD"/>
</dbReference>
<dbReference type="GO" id="GO:0090661">
    <property type="term" value="C:box H/ACA telomerase RNP complex"/>
    <property type="evidence" value="ECO:0000266"/>
    <property type="project" value="RGD"/>
</dbReference>
<dbReference type="GO" id="GO:0015030">
    <property type="term" value="C:Cajal body"/>
    <property type="evidence" value="ECO:0007669"/>
    <property type="project" value="UniProtKB-SubCell"/>
</dbReference>
<dbReference type="GO" id="GO:0000781">
    <property type="term" value="C:chromosome, telomeric region"/>
    <property type="evidence" value="ECO:0000266"/>
    <property type="project" value="RGD"/>
</dbReference>
<dbReference type="GO" id="GO:0005697">
    <property type="term" value="C:telomerase holoenzyme complex"/>
    <property type="evidence" value="ECO:0000250"/>
    <property type="project" value="UniProtKB"/>
</dbReference>
<dbReference type="GO" id="GO:0034513">
    <property type="term" value="F:box H/ACA snoRNA binding"/>
    <property type="evidence" value="ECO:0000266"/>
    <property type="project" value="RGD"/>
</dbReference>
<dbReference type="GO" id="GO:0003723">
    <property type="term" value="F:RNA binding"/>
    <property type="evidence" value="ECO:0000266"/>
    <property type="project" value="RGD"/>
</dbReference>
<dbReference type="GO" id="GO:0070034">
    <property type="term" value="F:telomerase RNA binding"/>
    <property type="evidence" value="ECO:0000266"/>
    <property type="project" value="RGD"/>
</dbReference>
<dbReference type="GO" id="GO:0000454">
    <property type="term" value="P:snoRNA guided rRNA pseudouridine synthesis"/>
    <property type="evidence" value="ECO:0000314"/>
    <property type="project" value="RGD"/>
</dbReference>
<dbReference type="GO" id="GO:0007004">
    <property type="term" value="P:telomere maintenance via telomerase"/>
    <property type="evidence" value="ECO:0000250"/>
    <property type="project" value="UniProtKB"/>
</dbReference>
<dbReference type="FunFam" id="2.40.10.230:FF:000001">
    <property type="entry name" value="H/ACA ribonucleoprotein complex subunit"/>
    <property type="match status" value="1"/>
</dbReference>
<dbReference type="Gene3D" id="2.40.10.230">
    <property type="entry name" value="Probable tRNA pseudouridine synthase domain"/>
    <property type="match status" value="1"/>
</dbReference>
<dbReference type="InterPro" id="IPR038664">
    <property type="entry name" value="Gar1/Naf1_Cbf5-bd_sf"/>
</dbReference>
<dbReference type="InterPro" id="IPR007504">
    <property type="entry name" value="H/ACA_rnp_Gar1/Naf1"/>
</dbReference>
<dbReference type="InterPro" id="IPR009000">
    <property type="entry name" value="Transl_B-barrel_sf"/>
</dbReference>
<dbReference type="PANTHER" id="PTHR23237:SF6">
    <property type="entry name" value="H_ACA RIBONUCLEOPROTEIN COMPLEX SUBUNIT 1"/>
    <property type="match status" value="1"/>
</dbReference>
<dbReference type="PANTHER" id="PTHR23237">
    <property type="entry name" value="NUCLEOLAR PROTEIN FAMILY A MEMBER 1 SNORNP PROTEIN GAR1"/>
    <property type="match status" value="1"/>
</dbReference>
<dbReference type="Pfam" id="PF04410">
    <property type="entry name" value="Gar1"/>
    <property type="match status" value="1"/>
</dbReference>
<dbReference type="SUPFAM" id="SSF50447">
    <property type="entry name" value="Translation proteins"/>
    <property type="match status" value="1"/>
</dbReference>
<sequence>MSFRGGGRGGFNRGGGGGGFNRGGGSNNHFRGGGGGGGGGGNFRGGGRGGFGRGGGRGGFNKFQDQGPPERVVLLGEFMHPCEDDIVCKCTTEENKVPYFNAPVYLENKEQIGKVDEIFGQLRDFYFSVKLSENMKASSFKKLQKFYIDPYKLLPLQRFLPRPPGEKGPPRGGGGGGGGGRGGRGGGRGGGGRGGGRGGGFRGGRGGGGGFRGGRGGGGGFRGRGH</sequence>
<feature type="chain" id="PRO_0000208554" description="H/ACA ribonucleoprotein complex subunit 1">
    <location>
        <begin position="1"/>
        <end position="226"/>
    </location>
</feature>
<feature type="region of interest" description="Disordered" evidence="3">
    <location>
        <begin position="1"/>
        <end position="66"/>
    </location>
</feature>
<feature type="region of interest" description="RGG-box 1">
    <location>
        <begin position="4"/>
        <end position="59"/>
    </location>
</feature>
<feature type="region of interest" description="Disordered" evidence="3">
    <location>
        <begin position="158"/>
        <end position="226"/>
    </location>
</feature>
<feature type="region of interest" description="RGG-box 2">
    <location>
        <begin position="171"/>
        <end position="226"/>
    </location>
</feature>
<feature type="compositionally biased region" description="Gly residues" evidence="3">
    <location>
        <begin position="1"/>
        <end position="59"/>
    </location>
</feature>
<feature type="compositionally biased region" description="Gly residues" evidence="3">
    <location>
        <begin position="170"/>
        <end position="226"/>
    </location>
</feature>
<feature type="cross-link" description="Glycyl lysine isopeptide (Lys-Gly) (interchain with G-Cter in SUMO2)" evidence="2">
    <location>
        <position position="136"/>
    </location>
</feature>
<accession>Q6AYA1</accession>